<protein>
    <recommendedName>
        <fullName evidence="3">AP-4 complex subunit epsilon</fullName>
    </recommendedName>
    <alternativeName>
        <fullName>AP-4 adaptor complex subunit epsilon</fullName>
    </alternativeName>
    <alternativeName>
        <fullName>Adaptor-related protein complex 4 subunit epsilon</fullName>
    </alternativeName>
    <alternativeName>
        <fullName>Epsilon subunit of AP-4</fullName>
    </alternativeName>
    <alternativeName>
        <fullName>Epsilon-adaptin</fullName>
    </alternativeName>
</protein>
<reference key="1">
    <citation type="journal article" date="2005" name="Nature">
        <title>The genome of the social amoeba Dictyostelium discoideum.</title>
        <authorList>
            <person name="Eichinger L."/>
            <person name="Pachebat J.A."/>
            <person name="Gloeckner G."/>
            <person name="Rajandream M.A."/>
            <person name="Sucgang R."/>
            <person name="Berriman M."/>
            <person name="Song J."/>
            <person name="Olsen R."/>
            <person name="Szafranski K."/>
            <person name="Xu Q."/>
            <person name="Tunggal B."/>
            <person name="Kummerfeld S."/>
            <person name="Madera M."/>
            <person name="Konfortov B.A."/>
            <person name="Rivero F."/>
            <person name="Bankier A.T."/>
            <person name="Lehmann R."/>
            <person name="Hamlin N."/>
            <person name="Davies R."/>
            <person name="Gaudet P."/>
            <person name="Fey P."/>
            <person name="Pilcher K."/>
            <person name="Chen G."/>
            <person name="Saunders D."/>
            <person name="Sodergren E.J."/>
            <person name="Davis P."/>
            <person name="Kerhornou A."/>
            <person name="Nie X."/>
            <person name="Hall N."/>
            <person name="Anjard C."/>
            <person name="Hemphill L."/>
            <person name="Bason N."/>
            <person name="Farbrother P."/>
            <person name="Desany B."/>
            <person name="Just E."/>
            <person name="Morio T."/>
            <person name="Rost R."/>
            <person name="Churcher C.M."/>
            <person name="Cooper J."/>
            <person name="Haydock S."/>
            <person name="van Driessche N."/>
            <person name="Cronin A."/>
            <person name="Goodhead I."/>
            <person name="Muzny D.M."/>
            <person name="Mourier T."/>
            <person name="Pain A."/>
            <person name="Lu M."/>
            <person name="Harper D."/>
            <person name="Lindsay R."/>
            <person name="Hauser H."/>
            <person name="James K.D."/>
            <person name="Quiles M."/>
            <person name="Madan Babu M."/>
            <person name="Saito T."/>
            <person name="Buchrieser C."/>
            <person name="Wardroper A."/>
            <person name="Felder M."/>
            <person name="Thangavelu M."/>
            <person name="Johnson D."/>
            <person name="Knights A."/>
            <person name="Loulseged H."/>
            <person name="Mungall K.L."/>
            <person name="Oliver K."/>
            <person name="Price C."/>
            <person name="Quail M.A."/>
            <person name="Urushihara H."/>
            <person name="Hernandez J."/>
            <person name="Rabbinowitsch E."/>
            <person name="Steffen D."/>
            <person name="Sanders M."/>
            <person name="Ma J."/>
            <person name="Kohara Y."/>
            <person name="Sharp S."/>
            <person name="Simmonds M.N."/>
            <person name="Spiegler S."/>
            <person name="Tivey A."/>
            <person name="Sugano S."/>
            <person name="White B."/>
            <person name="Walker D."/>
            <person name="Woodward J.R."/>
            <person name="Winckler T."/>
            <person name="Tanaka Y."/>
            <person name="Shaulsky G."/>
            <person name="Schleicher M."/>
            <person name="Weinstock G.M."/>
            <person name="Rosenthal A."/>
            <person name="Cox E.C."/>
            <person name="Chisholm R.L."/>
            <person name="Gibbs R.A."/>
            <person name="Loomis W.F."/>
            <person name="Platzer M."/>
            <person name="Kay R.R."/>
            <person name="Williams J.G."/>
            <person name="Dear P.H."/>
            <person name="Noegel A.A."/>
            <person name="Barrell B.G."/>
            <person name="Kuspa A."/>
        </authorList>
    </citation>
    <scope>NUCLEOTIDE SEQUENCE [LARGE SCALE GENOMIC DNA]</scope>
    <source>
        <strain>AX4</strain>
    </source>
</reference>
<dbReference type="EMBL" id="AAFI02000036">
    <property type="protein sequence ID" value="EAL67192.1"/>
    <property type="molecule type" value="Genomic_DNA"/>
</dbReference>
<dbReference type="RefSeq" id="XP_641169.1">
    <property type="nucleotide sequence ID" value="XM_636077.1"/>
</dbReference>
<dbReference type="SMR" id="Q54VE0"/>
<dbReference type="FunCoup" id="Q54VE0">
    <property type="interactions" value="146"/>
</dbReference>
<dbReference type="STRING" id="44689.Q54VE0"/>
<dbReference type="PaxDb" id="44689-DDB0237723"/>
<dbReference type="EnsemblProtists" id="EAL67192">
    <property type="protein sequence ID" value="EAL67192"/>
    <property type="gene ID" value="DDB_G0280427"/>
</dbReference>
<dbReference type="GeneID" id="8622549"/>
<dbReference type="KEGG" id="ddi:DDB_G0280427"/>
<dbReference type="dictyBase" id="DDB_G0280427">
    <property type="gene designation" value="ap4e1"/>
</dbReference>
<dbReference type="VEuPathDB" id="AmoebaDB:DDB_G0280427"/>
<dbReference type="eggNOG" id="KOG1062">
    <property type="taxonomic scope" value="Eukaryota"/>
</dbReference>
<dbReference type="HOGENOM" id="CLU_286275_0_0_1"/>
<dbReference type="InParanoid" id="Q54VE0"/>
<dbReference type="OMA" id="RMIYCHM"/>
<dbReference type="PhylomeDB" id="Q54VE0"/>
<dbReference type="Reactome" id="R-DDI-432720">
    <property type="pathway name" value="Lysosome Vesicle Biogenesis"/>
</dbReference>
<dbReference type="PRO" id="PR:Q54VE0"/>
<dbReference type="Proteomes" id="UP000002195">
    <property type="component" value="Chromosome 3"/>
</dbReference>
<dbReference type="GO" id="GO:0030124">
    <property type="term" value="C:AP-4 adaptor complex"/>
    <property type="evidence" value="ECO:0000318"/>
    <property type="project" value="GO_Central"/>
</dbReference>
<dbReference type="GO" id="GO:0005794">
    <property type="term" value="C:Golgi apparatus"/>
    <property type="evidence" value="ECO:0007669"/>
    <property type="project" value="UniProtKB-SubCell"/>
</dbReference>
<dbReference type="GO" id="GO:0140312">
    <property type="term" value="F:cargo adaptor activity"/>
    <property type="evidence" value="ECO:0000318"/>
    <property type="project" value="GO_Central"/>
</dbReference>
<dbReference type="GO" id="GO:0006886">
    <property type="term" value="P:intracellular protein transport"/>
    <property type="evidence" value="ECO:0007669"/>
    <property type="project" value="InterPro"/>
</dbReference>
<dbReference type="Gene3D" id="1.25.10.10">
    <property type="entry name" value="Leucine-rich Repeat Variant"/>
    <property type="match status" value="1"/>
</dbReference>
<dbReference type="InterPro" id="IPR050840">
    <property type="entry name" value="Adaptor_Complx_Large_Subunit"/>
</dbReference>
<dbReference type="InterPro" id="IPR011989">
    <property type="entry name" value="ARM-like"/>
</dbReference>
<dbReference type="InterPro" id="IPR016024">
    <property type="entry name" value="ARM-type_fold"/>
</dbReference>
<dbReference type="InterPro" id="IPR002553">
    <property type="entry name" value="Clathrin/coatomer_adapt-like_N"/>
</dbReference>
<dbReference type="PANTHER" id="PTHR22780">
    <property type="entry name" value="ADAPTIN, ALPHA/GAMMA/EPSILON"/>
    <property type="match status" value="1"/>
</dbReference>
<dbReference type="Pfam" id="PF01602">
    <property type="entry name" value="Adaptin_N"/>
    <property type="match status" value="1"/>
</dbReference>
<dbReference type="SUPFAM" id="SSF48371">
    <property type="entry name" value="ARM repeat"/>
    <property type="match status" value="1"/>
</dbReference>
<sequence length="1080" mass="123904">MNSSALNLIQFLESSKIQVPGGLKSVKGILDFDFYDLVKNIGESTSREEEVHIIQNEIIKLKSCFSKEQSKDKKRECLIRMIYCHMLGYDVPFGHIQALNMTQDSEILNKRTGYLTLSLCLPERHELLIMAVNSILKGLNSSNYLEVCSALTAMCKLIDNDTIPAFLQKVLQLLNHQKPIVRKKSVTVLHRFYRLVGDSFLDDDQIIDKLRQSLCDRDPSVMSASICIFLDISEKHSTLKDNNNQINNNNNNNNSNQIKKKNNEEINRSKNLISMLKELVPSFVGILKQVAEGRLPNSYIYHGIHHPWLQINLLKLLSNLGYQDKDSSNHMYTVLLFTMQQSQKFKNNVGFAILYETIKTLTLIHPNLQLIEQCSKNIAIFLKGKHHNLRYFGIKALASIVKVSPKLVLPYQVEVIESLESPDETLKRKSFDLLYKMTNQTNVVPVCSKLIEQLVLSKDQNFKSELISQITNIAEKYSPNDIWYIDTISTVLSILPNENNKDNNNNNNNNNNNNNNYQFAYNLIRLVSEEDDIKVKQHISEIYLNNIMISNEQQQQQQQENQNNLQQFSDIYIKIMSWVISEYSNLIVSNNGVIESDIISYLCDLLEKDYQGETKSWIIIGIGKLVAQLGKSLPMLELMTKKFKSSKSLICQQRSSELNEILKNPKSMSLILPLDAYCEDIDFNKIFNKFNDYSNKVGGKQYIPYEKRKNTPLVDISDGSSSHSNEKGLNFQYPPPPDPFNPHHNQQQLYPVHQHQPPSNHQQQQQQQQQQQQQQLQLFPQQPQQPQQLLLLGEDDTINLNNNSLVPVNNDQQLQPHQHQQQQQNQQQQQQNQQQQQQQNPQYPNNQLVTVPDQNAPKPIGLPKPSKVLWTKKGFVGNKQTPPQNATPQQQQQQQQQQTQNTLSQQQIQKHQQTHNNIDPEKEKLAKQLFGGFSENNNRNENSNNTDNNQNNVGITSKLQNKKSNNENNINNNKKESYLEELIDLSPNLISNINITNNSNNNNNNNNNNNNNNNNNNNNNNNNNNNLLLVDVEGDEQKEVKNSSCSSGNSELINLNLDENTTKNINGNLLGDDLEELNKN</sequence>
<gene>
    <name evidence="4" type="primary">ap4e1</name>
    <name evidence="4" type="ORF">DDB_G0280427</name>
</gene>
<accession>Q54VE0</accession>
<name>AP4E_DICDI</name>
<feature type="chain" id="PRO_0000328364" description="AP-4 complex subunit epsilon">
    <location>
        <begin position="1"/>
        <end position="1080"/>
    </location>
</feature>
<feature type="repeat" description="HEAT 1">
    <location>
        <begin position="161"/>
        <end position="198"/>
    </location>
</feature>
<feature type="repeat" description="HEAT 2">
    <location>
        <begin position="201"/>
        <end position="238"/>
    </location>
</feature>
<feature type="repeat" description="HEAT 3">
    <location>
        <begin position="369"/>
        <end position="405"/>
    </location>
</feature>
<feature type="repeat" description="HEAT 4">
    <location>
        <begin position="406"/>
        <end position="443"/>
    </location>
</feature>
<feature type="repeat" description="HEAT 5">
    <location>
        <begin position="445"/>
        <end position="479"/>
    </location>
</feature>
<feature type="region of interest" description="Disordered" evidence="2">
    <location>
        <begin position="711"/>
        <end position="782"/>
    </location>
</feature>
<feature type="region of interest" description="Disordered" evidence="2">
    <location>
        <begin position="801"/>
        <end position="920"/>
    </location>
</feature>
<feature type="region of interest" description="Disordered" evidence="2">
    <location>
        <begin position="933"/>
        <end position="973"/>
    </location>
</feature>
<feature type="region of interest" description="Disordered" evidence="2">
    <location>
        <begin position="996"/>
        <end position="1027"/>
    </location>
</feature>
<feature type="compositionally biased region" description="Low complexity" evidence="2">
    <location>
        <begin position="762"/>
        <end position="782"/>
    </location>
</feature>
<feature type="compositionally biased region" description="Low complexity" evidence="2">
    <location>
        <begin position="801"/>
        <end position="847"/>
    </location>
</feature>
<feature type="compositionally biased region" description="Low complexity" evidence="2">
    <location>
        <begin position="878"/>
        <end position="911"/>
    </location>
</feature>
<feature type="compositionally biased region" description="Low complexity" evidence="2">
    <location>
        <begin position="936"/>
        <end position="952"/>
    </location>
</feature>
<feature type="compositionally biased region" description="Low complexity" evidence="2">
    <location>
        <begin position="962"/>
        <end position="972"/>
    </location>
</feature>
<keyword id="KW-0333">Golgi apparatus</keyword>
<keyword id="KW-0472">Membrane</keyword>
<keyword id="KW-0653">Protein transport</keyword>
<keyword id="KW-1185">Reference proteome</keyword>
<keyword id="KW-0677">Repeat</keyword>
<keyword id="KW-0813">Transport</keyword>
<evidence type="ECO:0000250" key="1">
    <source>
        <dbReference type="UniProtKB" id="Q9UPM8"/>
    </source>
</evidence>
<evidence type="ECO:0000256" key="2">
    <source>
        <dbReference type="SAM" id="MobiDB-lite"/>
    </source>
</evidence>
<evidence type="ECO:0000305" key="3"/>
<evidence type="ECO:0000312" key="4">
    <source>
        <dbReference type="dictyBase" id="DDB_G0280427"/>
    </source>
</evidence>
<proteinExistence type="inferred from homology"/>
<organism>
    <name type="scientific">Dictyostelium discoideum</name>
    <name type="common">Social amoeba</name>
    <dbReference type="NCBI Taxonomy" id="44689"/>
    <lineage>
        <taxon>Eukaryota</taxon>
        <taxon>Amoebozoa</taxon>
        <taxon>Evosea</taxon>
        <taxon>Eumycetozoa</taxon>
        <taxon>Dictyostelia</taxon>
        <taxon>Dictyosteliales</taxon>
        <taxon>Dictyosteliaceae</taxon>
        <taxon>Dictyostelium</taxon>
    </lineage>
</organism>
<comment type="function">
    <text evidence="1">Probable component of an adaptor protein complex. Adaptor protein complexes are vesicle coat components involved both in vesicle formation and cargo selection. They control the vesicular transport of proteins in different trafficking pathways.</text>
</comment>
<comment type="subunit">
    <text evidence="1">May be part of the adaptor protein complex 4 (AP-4), a heterotetramer composed of two large adaptins (epsilon-type subunitand beta-type subunit), a medium adaptin (mu-type subunit) and a small adaptin (sigma-type).</text>
</comment>
<comment type="subcellular location">
    <subcellularLocation>
        <location evidence="1">Golgi apparatus</location>
        <location evidence="1">trans-Golgi network membrane</location>
        <topology evidence="1">Peripheral membrane protein</topology>
    </subcellularLocation>
</comment>
<comment type="similarity">
    <text evidence="3">Belongs to the adaptor complexes large subunit family.</text>
</comment>